<evidence type="ECO:0000255" key="1">
    <source>
        <dbReference type="HAMAP-Rule" id="MF_00692"/>
    </source>
</evidence>
<sequence length="478" mass="54618">MTLSFVTRWRDELPGTYTALSPTPLNNARLIWHNTELANTLSIPSSLFKNDAGVWGGETLLPGMSPLAQVYSGHQFGVWAGQLGDGRGILLGEQRLADGTTMDWHLKGAGLTPYSRMGDGRAVLRSTIRESLASEAMHYLGIPTTRALSIVTSDSPVYRETVEPGAMLMRVAPSHLRFGHFEHFYYRREPEKVRQLADFAIRHYWSHLEDDEDKYRLWFSDVVARTASLIAQWQTVGFAHGVMNTDNMSLLGLTLDYGPFGFLDDYEPGFICNHSDHQGRYSFDNQPAVALWNLQRLAQTLSPFVAVDALNEALDSYQQVLLTHYGQRMRQKLGFMTEQKEDNALLNELFSLMARERSDYTRTFRMLSLTEQYSAASPLRDEFIDRAAFDDWFARYRVRLQQDEVTDSERQQLMQSVNPALVLRNWLAQRAIEAAEKGDMTELHRLHEALRNPFSDRDDDYVSRPPDWGKRLEVSCSS</sequence>
<dbReference type="EC" id="2.7.7.-" evidence="1"/>
<dbReference type="EC" id="2.7.7.108" evidence="1"/>
<dbReference type="EMBL" id="CU928163">
    <property type="protein sequence ID" value="CAR13193.1"/>
    <property type="molecule type" value="Genomic_DNA"/>
</dbReference>
<dbReference type="RefSeq" id="WP_000175719.1">
    <property type="nucleotide sequence ID" value="NC_011751.1"/>
</dbReference>
<dbReference type="RefSeq" id="YP_002412725.1">
    <property type="nucleotide sequence ID" value="NC_011751.1"/>
</dbReference>
<dbReference type="SMR" id="B7N544"/>
<dbReference type="STRING" id="585056.ECUMN_1997"/>
<dbReference type="KEGG" id="eum:ECUMN_1997"/>
<dbReference type="PATRIC" id="fig|585056.7.peg.2182"/>
<dbReference type="HOGENOM" id="CLU_010245_4_0_6"/>
<dbReference type="Proteomes" id="UP000007097">
    <property type="component" value="Chromosome"/>
</dbReference>
<dbReference type="GO" id="GO:0070733">
    <property type="term" value="F:AMPylase activity"/>
    <property type="evidence" value="ECO:0007669"/>
    <property type="project" value="RHEA"/>
</dbReference>
<dbReference type="GO" id="GO:0005524">
    <property type="term" value="F:ATP binding"/>
    <property type="evidence" value="ECO:0007669"/>
    <property type="project" value="UniProtKB-UniRule"/>
</dbReference>
<dbReference type="GO" id="GO:0000287">
    <property type="term" value="F:magnesium ion binding"/>
    <property type="evidence" value="ECO:0007669"/>
    <property type="project" value="UniProtKB-UniRule"/>
</dbReference>
<dbReference type="HAMAP" id="MF_00692">
    <property type="entry name" value="YdiU_SelO"/>
    <property type="match status" value="1"/>
</dbReference>
<dbReference type="InterPro" id="IPR054838">
    <property type="entry name" value="adnlytase_SelO"/>
</dbReference>
<dbReference type="InterPro" id="IPR003846">
    <property type="entry name" value="SelO"/>
</dbReference>
<dbReference type="NCBIfam" id="NF040880">
    <property type="entry name" value="adnlytase_SelO"/>
    <property type="match status" value="1"/>
</dbReference>
<dbReference type="NCBIfam" id="NF000658">
    <property type="entry name" value="PRK00029.1"/>
    <property type="match status" value="1"/>
</dbReference>
<dbReference type="PANTHER" id="PTHR32057">
    <property type="entry name" value="PROTEIN ADENYLYLTRANSFERASE SELO, MITOCHONDRIAL"/>
    <property type="match status" value="1"/>
</dbReference>
<dbReference type="PANTHER" id="PTHR32057:SF14">
    <property type="entry name" value="PROTEIN ADENYLYLTRANSFERASE SELO, MITOCHONDRIAL"/>
    <property type="match status" value="1"/>
</dbReference>
<dbReference type="Pfam" id="PF02696">
    <property type="entry name" value="SelO"/>
    <property type="match status" value="1"/>
</dbReference>
<organism>
    <name type="scientific">Escherichia coli O17:K52:H18 (strain UMN026 / ExPEC)</name>
    <dbReference type="NCBI Taxonomy" id="585056"/>
    <lineage>
        <taxon>Bacteria</taxon>
        <taxon>Pseudomonadati</taxon>
        <taxon>Pseudomonadota</taxon>
        <taxon>Gammaproteobacteria</taxon>
        <taxon>Enterobacterales</taxon>
        <taxon>Enterobacteriaceae</taxon>
        <taxon>Escherichia</taxon>
    </lineage>
</organism>
<protein>
    <recommendedName>
        <fullName evidence="1">Protein nucleotidyltransferase YdiU</fullName>
        <ecNumber evidence="1">2.7.7.-</ecNumber>
    </recommendedName>
    <alternativeName>
        <fullName evidence="1">Protein adenylyltransferase YdiU</fullName>
        <ecNumber evidence="1">2.7.7.108</ecNumber>
    </alternativeName>
    <alternativeName>
        <fullName evidence="1">Protein uridylyltransferase YdiU</fullName>
        <ecNumber evidence="1">2.7.7.-</ecNumber>
    </alternativeName>
</protein>
<accession>B7N544</accession>
<name>SELO_ECOLU</name>
<comment type="function">
    <text evidence="1">Nucleotidyltransferase involved in the post-translational modification of proteins. It can catalyze the addition of adenosine monophosphate (AMP) or uridine monophosphate (UMP) to a protein, resulting in modifications known as AMPylation and UMPylation.</text>
</comment>
<comment type="catalytic activity">
    <reaction evidence="1">
        <text>L-seryl-[protein] + ATP = 3-O-(5'-adenylyl)-L-seryl-[protein] + diphosphate</text>
        <dbReference type="Rhea" id="RHEA:58120"/>
        <dbReference type="Rhea" id="RHEA-COMP:9863"/>
        <dbReference type="Rhea" id="RHEA-COMP:15073"/>
        <dbReference type="ChEBI" id="CHEBI:29999"/>
        <dbReference type="ChEBI" id="CHEBI:30616"/>
        <dbReference type="ChEBI" id="CHEBI:33019"/>
        <dbReference type="ChEBI" id="CHEBI:142516"/>
        <dbReference type="EC" id="2.7.7.108"/>
    </reaction>
</comment>
<comment type="catalytic activity">
    <reaction evidence="1">
        <text>L-threonyl-[protein] + ATP = 3-O-(5'-adenylyl)-L-threonyl-[protein] + diphosphate</text>
        <dbReference type="Rhea" id="RHEA:54292"/>
        <dbReference type="Rhea" id="RHEA-COMP:11060"/>
        <dbReference type="Rhea" id="RHEA-COMP:13847"/>
        <dbReference type="ChEBI" id="CHEBI:30013"/>
        <dbReference type="ChEBI" id="CHEBI:30616"/>
        <dbReference type="ChEBI" id="CHEBI:33019"/>
        <dbReference type="ChEBI" id="CHEBI:138113"/>
        <dbReference type="EC" id="2.7.7.108"/>
    </reaction>
</comment>
<comment type="catalytic activity">
    <reaction evidence="1">
        <text>L-tyrosyl-[protein] + ATP = O-(5'-adenylyl)-L-tyrosyl-[protein] + diphosphate</text>
        <dbReference type="Rhea" id="RHEA:54288"/>
        <dbReference type="Rhea" id="RHEA-COMP:10136"/>
        <dbReference type="Rhea" id="RHEA-COMP:13846"/>
        <dbReference type="ChEBI" id="CHEBI:30616"/>
        <dbReference type="ChEBI" id="CHEBI:33019"/>
        <dbReference type="ChEBI" id="CHEBI:46858"/>
        <dbReference type="ChEBI" id="CHEBI:83624"/>
        <dbReference type="EC" id="2.7.7.108"/>
    </reaction>
</comment>
<comment type="catalytic activity">
    <reaction evidence="1">
        <text>L-histidyl-[protein] + UTP = N(tele)-(5'-uridylyl)-L-histidyl-[protein] + diphosphate</text>
        <dbReference type="Rhea" id="RHEA:83891"/>
        <dbReference type="Rhea" id="RHEA-COMP:9745"/>
        <dbReference type="Rhea" id="RHEA-COMP:20239"/>
        <dbReference type="ChEBI" id="CHEBI:29979"/>
        <dbReference type="ChEBI" id="CHEBI:33019"/>
        <dbReference type="ChEBI" id="CHEBI:46398"/>
        <dbReference type="ChEBI" id="CHEBI:233474"/>
    </reaction>
</comment>
<comment type="catalytic activity">
    <reaction evidence="1">
        <text>L-seryl-[protein] + UTP = O-(5'-uridylyl)-L-seryl-[protein] + diphosphate</text>
        <dbReference type="Rhea" id="RHEA:64604"/>
        <dbReference type="Rhea" id="RHEA-COMP:9863"/>
        <dbReference type="Rhea" id="RHEA-COMP:16635"/>
        <dbReference type="ChEBI" id="CHEBI:29999"/>
        <dbReference type="ChEBI" id="CHEBI:33019"/>
        <dbReference type="ChEBI" id="CHEBI:46398"/>
        <dbReference type="ChEBI" id="CHEBI:156051"/>
    </reaction>
</comment>
<comment type="catalytic activity">
    <reaction evidence="1">
        <text>L-tyrosyl-[protein] + UTP = O-(5'-uridylyl)-L-tyrosyl-[protein] + diphosphate</text>
        <dbReference type="Rhea" id="RHEA:83887"/>
        <dbReference type="Rhea" id="RHEA-COMP:10136"/>
        <dbReference type="Rhea" id="RHEA-COMP:20238"/>
        <dbReference type="ChEBI" id="CHEBI:33019"/>
        <dbReference type="ChEBI" id="CHEBI:46398"/>
        <dbReference type="ChEBI" id="CHEBI:46858"/>
        <dbReference type="ChEBI" id="CHEBI:90602"/>
    </reaction>
</comment>
<comment type="cofactor">
    <cofactor evidence="1">
        <name>Mg(2+)</name>
        <dbReference type="ChEBI" id="CHEBI:18420"/>
    </cofactor>
    <cofactor evidence="1">
        <name>Mn(2+)</name>
        <dbReference type="ChEBI" id="CHEBI:29035"/>
    </cofactor>
</comment>
<comment type="similarity">
    <text evidence="1">Belongs to the SELO family.</text>
</comment>
<reference key="1">
    <citation type="journal article" date="2009" name="PLoS Genet.">
        <title>Organised genome dynamics in the Escherichia coli species results in highly diverse adaptive paths.</title>
        <authorList>
            <person name="Touchon M."/>
            <person name="Hoede C."/>
            <person name="Tenaillon O."/>
            <person name="Barbe V."/>
            <person name="Baeriswyl S."/>
            <person name="Bidet P."/>
            <person name="Bingen E."/>
            <person name="Bonacorsi S."/>
            <person name="Bouchier C."/>
            <person name="Bouvet O."/>
            <person name="Calteau A."/>
            <person name="Chiapello H."/>
            <person name="Clermont O."/>
            <person name="Cruveiller S."/>
            <person name="Danchin A."/>
            <person name="Diard M."/>
            <person name="Dossat C."/>
            <person name="Karoui M.E."/>
            <person name="Frapy E."/>
            <person name="Garry L."/>
            <person name="Ghigo J.M."/>
            <person name="Gilles A.M."/>
            <person name="Johnson J."/>
            <person name="Le Bouguenec C."/>
            <person name="Lescat M."/>
            <person name="Mangenot S."/>
            <person name="Martinez-Jehanne V."/>
            <person name="Matic I."/>
            <person name="Nassif X."/>
            <person name="Oztas S."/>
            <person name="Petit M.A."/>
            <person name="Pichon C."/>
            <person name="Rouy Z."/>
            <person name="Ruf C.S."/>
            <person name="Schneider D."/>
            <person name="Tourret J."/>
            <person name="Vacherie B."/>
            <person name="Vallenet D."/>
            <person name="Medigue C."/>
            <person name="Rocha E.P.C."/>
            <person name="Denamur E."/>
        </authorList>
    </citation>
    <scope>NUCLEOTIDE SEQUENCE [LARGE SCALE GENOMIC DNA]</scope>
    <source>
        <strain>UMN026 / ExPEC</strain>
    </source>
</reference>
<feature type="chain" id="PRO_1000132109" description="Protein nucleotidyltransferase YdiU">
    <location>
        <begin position="1"/>
        <end position="478"/>
    </location>
</feature>
<feature type="active site" description="Proton acceptor" evidence="1">
    <location>
        <position position="246"/>
    </location>
</feature>
<feature type="binding site" evidence="1">
    <location>
        <position position="84"/>
    </location>
    <ligand>
        <name>ATP</name>
        <dbReference type="ChEBI" id="CHEBI:30616"/>
    </ligand>
</feature>
<feature type="binding site" evidence="1">
    <location>
        <position position="86"/>
    </location>
    <ligand>
        <name>ATP</name>
        <dbReference type="ChEBI" id="CHEBI:30616"/>
    </ligand>
</feature>
<feature type="binding site" evidence="1">
    <location>
        <position position="87"/>
    </location>
    <ligand>
        <name>ATP</name>
        <dbReference type="ChEBI" id="CHEBI:30616"/>
    </ligand>
</feature>
<feature type="binding site" evidence="1">
    <location>
        <position position="107"/>
    </location>
    <ligand>
        <name>ATP</name>
        <dbReference type="ChEBI" id="CHEBI:30616"/>
    </ligand>
</feature>
<feature type="binding site" evidence="1">
    <location>
        <position position="119"/>
    </location>
    <ligand>
        <name>ATP</name>
        <dbReference type="ChEBI" id="CHEBI:30616"/>
    </ligand>
</feature>
<feature type="binding site" evidence="1">
    <location>
        <position position="120"/>
    </location>
    <ligand>
        <name>ATP</name>
        <dbReference type="ChEBI" id="CHEBI:30616"/>
    </ligand>
</feature>
<feature type="binding site" evidence="1">
    <location>
        <position position="170"/>
    </location>
    <ligand>
        <name>ATP</name>
        <dbReference type="ChEBI" id="CHEBI:30616"/>
    </ligand>
</feature>
<feature type="binding site" evidence="1">
    <location>
        <position position="177"/>
    </location>
    <ligand>
        <name>ATP</name>
        <dbReference type="ChEBI" id="CHEBI:30616"/>
    </ligand>
</feature>
<feature type="binding site" evidence="1">
    <location>
        <position position="247"/>
    </location>
    <ligand>
        <name>Mg(2+)</name>
        <dbReference type="ChEBI" id="CHEBI:18420"/>
    </ligand>
</feature>
<feature type="binding site" evidence="1">
    <location>
        <position position="256"/>
    </location>
    <ligand>
        <name>ATP</name>
        <dbReference type="ChEBI" id="CHEBI:30616"/>
    </ligand>
</feature>
<feature type="binding site" evidence="1">
    <location>
        <position position="256"/>
    </location>
    <ligand>
        <name>Mg(2+)</name>
        <dbReference type="ChEBI" id="CHEBI:18420"/>
    </ligand>
</feature>
<gene>
    <name evidence="1" type="primary">ydiU</name>
    <name evidence="1" type="synonym">selO</name>
    <name type="ordered locus">ECUMN_1997</name>
</gene>
<proteinExistence type="inferred from homology"/>
<keyword id="KW-0067">ATP-binding</keyword>
<keyword id="KW-0460">Magnesium</keyword>
<keyword id="KW-0464">Manganese</keyword>
<keyword id="KW-0479">Metal-binding</keyword>
<keyword id="KW-0547">Nucleotide-binding</keyword>
<keyword id="KW-0548">Nucleotidyltransferase</keyword>
<keyword id="KW-0808">Transferase</keyword>